<proteinExistence type="evidence at protein level"/>
<accession>P02080</accession>
<feature type="chain" id="PRO_0000052865" description="Hemoglobin subunit beta-C(NA)">
    <location>
        <begin position="1"/>
        <end position="141"/>
    </location>
</feature>
<feature type="domain" description="Globin" evidence="1">
    <location>
        <begin position="1"/>
        <end position="141"/>
    </location>
</feature>
<feature type="binding site" description="distal binding residue">
    <location>
        <position position="58"/>
    </location>
    <ligand>
        <name>heme b</name>
        <dbReference type="ChEBI" id="CHEBI:60344"/>
    </ligand>
    <ligandPart>
        <name>Fe</name>
        <dbReference type="ChEBI" id="CHEBI:18248"/>
    </ligandPart>
</feature>
<feature type="binding site" description="proximal binding residue">
    <location>
        <position position="87"/>
    </location>
    <ligand>
        <name>heme b</name>
        <dbReference type="ChEBI" id="CHEBI:60344"/>
    </ligand>
    <ligandPart>
        <name>Fe</name>
        <dbReference type="ChEBI" id="CHEBI:18248"/>
    </ligandPart>
</feature>
<dbReference type="PIR" id="A90239">
    <property type="entry name" value="HBSHBC"/>
</dbReference>
<dbReference type="GO" id="GO:0072562">
    <property type="term" value="C:blood microparticle"/>
    <property type="evidence" value="ECO:0007669"/>
    <property type="project" value="TreeGrafter"/>
</dbReference>
<dbReference type="GO" id="GO:0031838">
    <property type="term" value="C:haptoglobin-hemoglobin complex"/>
    <property type="evidence" value="ECO:0007669"/>
    <property type="project" value="TreeGrafter"/>
</dbReference>
<dbReference type="GO" id="GO:0005833">
    <property type="term" value="C:hemoglobin complex"/>
    <property type="evidence" value="ECO:0007669"/>
    <property type="project" value="InterPro"/>
</dbReference>
<dbReference type="GO" id="GO:0031720">
    <property type="term" value="F:haptoglobin binding"/>
    <property type="evidence" value="ECO:0007669"/>
    <property type="project" value="TreeGrafter"/>
</dbReference>
<dbReference type="GO" id="GO:0020037">
    <property type="term" value="F:heme binding"/>
    <property type="evidence" value="ECO:0007669"/>
    <property type="project" value="InterPro"/>
</dbReference>
<dbReference type="GO" id="GO:0031721">
    <property type="term" value="F:hemoglobin alpha binding"/>
    <property type="evidence" value="ECO:0007669"/>
    <property type="project" value="TreeGrafter"/>
</dbReference>
<dbReference type="GO" id="GO:0046872">
    <property type="term" value="F:metal ion binding"/>
    <property type="evidence" value="ECO:0007669"/>
    <property type="project" value="UniProtKB-KW"/>
</dbReference>
<dbReference type="GO" id="GO:0043177">
    <property type="term" value="F:organic acid binding"/>
    <property type="evidence" value="ECO:0007669"/>
    <property type="project" value="TreeGrafter"/>
</dbReference>
<dbReference type="GO" id="GO:0019825">
    <property type="term" value="F:oxygen binding"/>
    <property type="evidence" value="ECO:0007669"/>
    <property type="project" value="InterPro"/>
</dbReference>
<dbReference type="GO" id="GO:0005344">
    <property type="term" value="F:oxygen carrier activity"/>
    <property type="evidence" value="ECO:0007669"/>
    <property type="project" value="UniProtKB-KW"/>
</dbReference>
<dbReference type="GO" id="GO:0004601">
    <property type="term" value="F:peroxidase activity"/>
    <property type="evidence" value="ECO:0007669"/>
    <property type="project" value="TreeGrafter"/>
</dbReference>
<dbReference type="GO" id="GO:0042744">
    <property type="term" value="P:hydrogen peroxide catabolic process"/>
    <property type="evidence" value="ECO:0007669"/>
    <property type="project" value="TreeGrafter"/>
</dbReference>
<dbReference type="CDD" id="cd08925">
    <property type="entry name" value="Hb-beta-like"/>
    <property type="match status" value="1"/>
</dbReference>
<dbReference type="FunFam" id="1.10.490.10:FF:000001">
    <property type="entry name" value="Hemoglobin subunit beta"/>
    <property type="match status" value="1"/>
</dbReference>
<dbReference type="Gene3D" id="1.10.490.10">
    <property type="entry name" value="Globins"/>
    <property type="match status" value="1"/>
</dbReference>
<dbReference type="InterPro" id="IPR000971">
    <property type="entry name" value="Globin"/>
</dbReference>
<dbReference type="InterPro" id="IPR009050">
    <property type="entry name" value="Globin-like_sf"/>
</dbReference>
<dbReference type="InterPro" id="IPR012292">
    <property type="entry name" value="Globin/Proto"/>
</dbReference>
<dbReference type="InterPro" id="IPR002337">
    <property type="entry name" value="Hemoglobin_b"/>
</dbReference>
<dbReference type="InterPro" id="IPR050056">
    <property type="entry name" value="Hemoglobin_oxygen_transport"/>
</dbReference>
<dbReference type="PANTHER" id="PTHR11442">
    <property type="entry name" value="HEMOGLOBIN FAMILY MEMBER"/>
    <property type="match status" value="1"/>
</dbReference>
<dbReference type="PANTHER" id="PTHR11442:SF42">
    <property type="entry name" value="HEMOGLOBIN SUBUNIT BETA"/>
    <property type="match status" value="1"/>
</dbReference>
<dbReference type="Pfam" id="PF00042">
    <property type="entry name" value="Globin"/>
    <property type="match status" value="1"/>
</dbReference>
<dbReference type="PRINTS" id="PR00814">
    <property type="entry name" value="BETAHAEM"/>
</dbReference>
<dbReference type="SUPFAM" id="SSF46458">
    <property type="entry name" value="Globin-like"/>
    <property type="match status" value="1"/>
</dbReference>
<dbReference type="PROSITE" id="PS01033">
    <property type="entry name" value="GLOBIN"/>
    <property type="match status" value="1"/>
</dbReference>
<organism>
    <name type="scientific">Ammotragus lervia</name>
    <name type="common">Barbary sheep</name>
    <name type="synonym">Antilope lervia</name>
    <dbReference type="NCBI Taxonomy" id="9899"/>
    <lineage>
        <taxon>Eukaryota</taxon>
        <taxon>Metazoa</taxon>
        <taxon>Chordata</taxon>
        <taxon>Craniata</taxon>
        <taxon>Vertebrata</taxon>
        <taxon>Euteleostomi</taxon>
        <taxon>Mammalia</taxon>
        <taxon>Eutheria</taxon>
        <taxon>Laurasiatheria</taxon>
        <taxon>Artiodactyla</taxon>
        <taxon>Ruminantia</taxon>
        <taxon>Pecora</taxon>
        <taxon>Bovidae</taxon>
        <taxon>Caprinae</taxon>
        <taxon>Ammotragus</taxon>
    </lineage>
</organism>
<reference key="1">
    <citation type="journal article" date="1968" name="Biochem. J.">
        <title>Studies of haemoglobin types in Barbary sheep (Ammotragus lervia).</title>
        <authorList>
            <person name="Huisman T.H.J."/>
            <person name="Dasher G.A."/>
            <person name="Moretz W.H. Jr."/>
            <person name="Dozy A.M."/>
            <person name="Wilson J.B."/>
            <person name="van Vliet G."/>
        </authorList>
    </citation>
    <scope>PRELIMINARY PROTEIN SEQUENCE</scope>
</reference>
<reference key="2">
    <citation type="submission" date="1969-01" db="PIR data bank">
        <authorList>
            <person name="Huisman T.H.J."/>
        </authorList>
    </citation>
    <scope>SEQUENCE REVISION TO 103</scope>
</reference>
<keyword id="KW-0903">Direct protein sequencing</keyword>
<keyword id="KW-0349">Heme</keyword>
<keyword id="KW-0408">Iron</keyword>
<keyword id="KW-0479">Metal-binding</keyword>
<keyword id="KW-0561">Oxygen transport</keyword>
<keyword id="KW-0813">Transport</keyword>
<name>HBBN_AMMLE</name>
<evidence type="ECO:0000255" key="1">
    <source>
        <dbReference type="PROSITE-ProRule" id="PRU00238"/>
    </source>
</evidence>
<sequence length="141" mass="15635">PBKALITGFWSKVKVBZVGAZALGRLLVVYPWTZRFFZHFGBLSSABAVMBBAKVKAHGKKVLBSFSBGLKHLBBLKGAFASLSZLHCBKLHVBPZBFRLLGBVLVVVLARHFGKZFBPZLZAZFZKVVAGVASALAHRYH</sequence>
<protein>
    <recommendedName>
        <fullName>Hemoglobin subunit beta-C(NA)</fullName>
    </recommendedName>
    <alternativeName>
        <fullName>Beta-C(NA)-globin</fullName>
    </alternativeName>
    <alternativeName>
        <fullName>Hemoglobin beta C(NA) chain</fullName>
    </alternativeName>
</protein>
<comment type="function">
    <text>Involved in oxygen transport from the lung to the various peripheral tissues.</text>
</comment>
<comment type="subunit">
    <text>Heterotetramer of two alpha chains and two beta chains.</text>
</comment>
<comment type="tissue specificity">
    <text>Red blood cells.</text>
</comment>
<comment type="miscellaneous">
    <text>This type of beta C chain is found in non-anemic barbary sheep, whereas the other type of beta C chain is found in anemic barbary sheep.</text>
</comment>
<comment type="similarity">
    <text evidence="1">Belongs to the globin family.</text>
</comment>